<accession>P07262</accession>
<accession>D6W368</accession>
<accession>Q08899</accession>
<sequence length="454" mass="49570">MSEPEFQQAYEEVVSSLEDSTLFEQHPEYRKVLPIVSVPERIIQFRVTWENDKGEQEVAQGYRVQYNSAKGPYKGGLRFHPSVNLSILKFLGFEQIFKNSLTGLDMGGGKGGLCVDLKGRSNNEIRRICYAFMRELSRHIGQDTDVPAGDIGVGGREIGYLFGAYRSYKNSWEGVLTGKGLNWGGSLIRPEATGYGLVYYTQAMIDYATNGKESFEGKRVTISGSGNVAQYAALKVIELGGTVVSLSDSKGCIISETGITSEQVADISSAKVNFKSLEQIVNEYSTFSENKVQYIAGARPWTHVQKVDIALPCATQNEVSGEEAKALVAQGVKFIAEGSNMGSTPEAIAVFETARSTATGPSEAVWYGPPKAANLGGVAVSGLEMAQNSQRITWTSERVDQELKRIMINCFNECIDYAKKYTKDGKVLPSLVKGANIASFIKVSDAMFDQGDVF</sequence>
<name>DHE4_YEAST</name>
<comment type="function">
    <text evidence="9">Catalyzes the incorporation of an ammonium ion into alpha-ketoglutarate to form L-glutamate, the major route of assimilation of ammonia into an organic form in yeast.</text>
</comment>
<comment type="catalytic activity">
    <reaction evidence="4 5">
        <text>L-glutamate + NADP(+) + H2O = 2-oxoglutarate + NH4(+) + NADPH + H(+)</text>
        <dbReference type="Rhea" id="RHEA:11612"/>
        <dbReference type="ChEBI" id="CHEBI:15377"/>
        <dbReference type="ChEBI" id="CHEBI:15378"/>
        <dbReference type="ChEBI" id="CHEBI:16810"/>
        <dbReference type="ChEBI" id="CHEBI:28938"/>
        <dbReference type="ChEBI" id="CHEBI:29985"/>
        <dbReference type="ChEBI" id="CHEBI:57783"/>
        <dbReference type="ChEBI" id="CHEBI:58349"/>
        <dbReference type="EC" id="1.4.1.4"/>
    </reaction>
    <physiologicalReaction direction="right-to-left" evidence="5">
        <dbReference type="Rhea" id="RHEA:11614"/>
    </physiologicalReaction>
</comment>
<comment type="subunit">
    <text>Homohexamer.</text>
</comment>
<comment type="miscellaneous">
    <text evidence="3">Present with 77500 molecules/cell in log phase SD medium.</text>
</comment>
<comment type="similarity">
    <text evidence="8">Belongs to the Glu/Leu/Phe/Val dehydrogenases family.</text>
</comment>
<dbReference type="EC" id="1.4.1.4" evidence="4 5"/>
<dbReference type="EMBL" id="M11297">
    <property type="protein sequence ID" value="AAB03898.1"/>
    <property type="molecule type" value="Genomic_DNA"/>
</dbReference>
<dbReference type="EMBL" id="M10590">
    <property type="protein sequence ID" value="AAA34642.1"/>
    <property type="molecule type" value="Genomic_DNA"/>
</dbReference>
<dbReference type="EMBL" id="Z75283">
    <property type="protein sequence ID" value="CAA99706.1"/>
    <property type="molecule type" value="Genomic_DNA"/>
</dbReference>
<dbReference type="EMBL" id="BK006948">
    <property type="protein sequence ID" value="DAA11134.1"/>
    <property type="molecule type" value="Genomic_DNA"/>
</dbReference>
<dbReference type="PIR" id="S67287">
    <property type="entry name" value="A25275"/>
</dbReference>
<dbReference type="RefSeq" id="NP_015020.3">
    <property type="nucleotide sequence ID" value="NM_001183795.3"/>
</dbReference>
<dbReference type="SMR" id="P07262"/>
<dbReference type="BioGRID" id="34758">
    <property type="interactions" value="126"/>
</dbReference>
<dbReference type="DIP" id="DIP-1329N"/>
<dbReference type="FunCoup" id="P07262">
    <property type="interactions" value="896"/>
</dbReference>
<dbReference type="IntAct" id="P07262">
    <property type="interactions" value="72"/>
</dbReference>
<dbReference type="MINT" id="P07262"/>
<dbReference type="STRING" id="4932.YOR375C"/>
<dbReference type="iPTMnet" id="P07262"/>
<dbReference type="PaxDb" id="4932-YOR375C"/>
<dbReference type="PeptideAtlas" id="P07262"/>
<dbReference type="EnsemblFungi" id="YOR375C_mRNA">
    <property type="protein sequence ID" value="YOR375C"/>
    <property type="gene ID" value="YOR375C"/>
</dbReference>
<dbReference type="GeneID" id="854557"/>
<dbReference type="KEGG" id="sce:YOR375C"/>
<dbReference type="AGR" id="SGD:S000005902"/>
<dbReference type="SGD" id="S000005902">
    <property type="gene designation" value="GDH1"/>
</dbReference>
<dbReference type="VEuPathDB" id="FungiDB:YOR375C"/>
<dbReference type="eggNOG" id="KOG2250">
    <property type="taxonomic scope" value="Eukaryota"/>
</dbReference>
<dbReference type="GeneTree" id="ENSGT00390000000854"/>
<dbReference type="HOGENOM" id="CLU_025763_2_0_1"/>
<dbReference type="InParanoid" id="P07262"/>
<dbReference type="OMA" id="MIMGWMM"/>
<dbReference type="OrthoDB" id="6718861at2759"/>
<dbReference type="BioCyc" id="MetaCyc:YOR375C-MONOMER"/>
<dbReference type="BioCyc" id="YEAST:YOR375C-MONOMER"/>
<dbReference type="BRENDA" id="1.4.1.4">
    <property type="organism ID" value="984"/>
</dbReference>
<dbReference type="BioGRID-ORCS" id="854557">
    <property type="hits" value="10 hits in 10 CRISPR screens"/>
</dbReference>
<dbReference type="CD-CODE" id="E03F929F">
    <property type="entry name" value="Stress granule"/>
</dbReference>
<dbReference type="PRO" id="PR:P07262"/>
<dbReference type="Proteomes" id="UP000002311">
    <property type="component" value="Chromosome XV"/>
</dbReference>
<dbReference type="RNAct" id="P07262">
    <property type="molecule type" value="protein"/>
</dbReference>
<dbReference type="GO" id="GO:0005737">
    <property type="term" value="C:cytoplasm"/>
    <property type="evidence" value="ECO:0007005"/>
    <property type="project" value="SGD"/>
</dbReference>
<dbReference type="GO" id="GO:0005829">
    <property type="term" value="C:cytosol"/>
    <property type="evidence" value="ECO:0000318"/>
    <property type="project" value="GO_Central"/>
</dbReference>
<dbReference type="GO" id="GO:0005634">
    <property type="term" value="C:nucleus"/>
    <property type="evidence" value="ECO:0000314"/>
    <property type="project" value="SGD"/>
</dbReference>
<dbReference type="GO" id="GO:0004354">
    <property type="term" value="F:glutamate dehydrogenase (NADP+) activity"/>
    <property type="evidence" value="ECO:0000314"/>
    <property type="project" value="SGD"/>
</dbReference>
<dbReference type="GO" id="GO:0006537">
    <property type="term" value="P:glutamate biosynthetic process"/>
    <property type="evidence" value="ECO:0000315"/>
    <property type="project" value="SGD"/>
</dbReference>
<dbReference type="CDD" id="cd05313">
    <property type="entry name" value="NAD_bind_2_Glu_DH"/>
    <property type="match status" value="1"/>
</dbReference>
<dbReference type="FunFam" id="1.10.285.10:FF:000001">
    <property type="entry name" value="Glutamate dehydrogenase"/>
    <property type="match status" value="1"/>
</dbReference>
<dbReference type="FunFam" id="1.10.285.10:FF:000003">
    <property type="entry name" value="Glutamate dehydrogenase"/>
    <property type="match status" value="1"/>
</dbReference>
<dbReference type="FunFam" id="3.40.50.10860:FF:000002">
    <property type="entry name" value="Glutamate dehydrogenase"/>
    <property type="match status" value="1"/>
</dbReference>
<dbReference type="FunFam" id="3.40.50.720:FF:000030">
    <property type="entry name" value="Glutamate dehydrogenase"/>
    <property type="match status" value="1"/>
</dbReference>
<dbReference type="Gene3D" id="1.10.285.10">
    <property type="entry name" value="Glutamate Dehydrogenase, chain A, domain 3"/>
    <property type="match status" value="2"/>
</dbReference>
<dbReference type="Gene3D" id="3.40.50.10860">
    <property type="entry name" value="Leucine Dehydrogenase, chain A, domain 1"/>
    <property type="match status" value="1"/>
</dbReference>
<dbReference type="Gene3D" id="3.40.50.720">
    <property type="entry name" value="NAD(P)-binding Rossmann-like Domain"/>
    <property type="match status" value="1"/>
</dbReference>
<dbReference type="InterPro" id="IPR046346">
    <property type="entry name" value="Aminoacid_DH-like_N_sf"/>
</dbReference>
<dbReference type="InterPro" id="IPR006095">
    <property type="entry name" value="Glu/Leu/Phe/Val/Trp_DH"/>
</dbReference>
<dbReference type="InterPro" id="IPR006096">
    <property type="entry name" value="Glu/Leu/Phe/Val/Trp_DH_C"/>
</dbReference>
<dbReference type="InterPro" id="IPR006097">
    <property type="entry name" value="Glu/Leu/Phe/Val/Trp_DH_dimer"/>
</dbReference>
<dbReference type="InterPro" id="IPR033524">
    <property type="entry name" value="Glu/Leu/Phe/Val_DH_AS"/>
</dbReference>
<dbReference type="InterPro" id="IPR014362">
    <property type="entry name" value="Glu_DH"/>
</dbReference>
<dbReference type="InterPro" id="IPR050724">
    <property type="entry name" value="Glu_Leu_Phe_Val_DH"/>
</dbReference>
<dbReference type="InterPro" id="IPR036291">
    <property type="entry name" value="NAD(P)-bd_dom_sf"/>
</dbReference>
<dbReference type="InterPro" id="IPR033922">
    <property type="entry name" value="NAD_bind_Glu_DH"/>
</dbReference>
<dbReference type="NCBIfam" id="NF006929">
    <property type="entry name" value="PRK09414.1"/>
    <property type="match status" value="1"/>
</dbReference>
<dbReference type="PANTHER" id="PTHR43571">
    <property type="entry name" value="NADP-SPECIFIC GLUTAMATE DEHYDROGENASE 1-RELATED"/>
    <property type="match status" value="1"/>
</dbReference>
<dbReference type="PANTHER" id="PTHR43571:SF1">
    <property type="entry name" value="NADP-SPECIFIC GLUTAMATE DEHYDROGENASE 1-RELATED"/>
    <property type="match status" value="1"/>
</dbReference>
<dbReference type="Pfam" id="PF00208">
    <property type="entry name" value="ELFV_dehydrog"/>
    <property type="match status" value="1"/>
</dbReference>
<dbReference type="Pfam" id="PF02812">
    <property type="entry name" value="ELFV_dehydrog_N"/>
    <property type="match status" value="1"/>
</dbReference>
<dbReference type="PIRSF" id="PIRSF000185">
    <property type="entry name" value="Glu_DH"/>
    <property type="match status" value="1"/>
</dbReference>
<dbReference type="PRINTS" id="PR00082">
    <property type="entry name" value="GLFDHDRGNASE"/>
</dbReference>
<dbReference type="SMART" id="SM00839">
    <property type="entry name" value="ELFV_dehydrog"/>
    <property type="match status" value="1"/>
</dbReference>
<dbReference type="SUPFAM" id="SSF53223">
    <property type="entry name" value="Aminoacid dehydrogenase-like, N-terminal domain"/>
    <property type="match status" value="1"/>
</dbReference>
<dbReference type="SUPFAM" id="SSF51735">
    <property type="entry name" value="NAD(P)-binding Rossmann-fold domains"/>
    <property type="match status" value="1"/>
</dbReference>
<dbReference type="PROSITE" id="PS00074">
    <property type="entry name" value="GLFV_DEHYDROGENASE"/>
    <property type="match status" value="1"/>
</dbReference>
<protein>
    <recommendedName>
        <fullName evidence="6">NADP-specific glutamate dehydrogenase 1</fullName>
        <shortName>NADP-GDH 1</shortName>
        <ecNumber evidence="4 5">1.4.1.4</ecNumber>
    </recommendedName>
    <alternativeName>
        <fullName evidence="7">NADP-dependent glutamate dehydrogenase 1</fullName>
    </alternativeName>
</protein>
<keyword id="KW-0007">Acetylation</keyword>
<keyword id="KW-0903">Direct protein sequencing</keyword>
<keyword id="KW-1017">Isopeptide bond</keyword>
<keyword id="KW-0521">NADP</keyword>
<keyword id="KW-0560">Oxidoreductase</keyword>
<keyword id="KW-1185">Reference proteome</keyword>
<keyword id="KW-0832">Ubl conjugation</keyword>
<proteinExistence type="evidence at protein level"/>
<gene>
    <name evidence="7" type="primary">GDH1</name>
    <name type="synonym">DHE4</name>
    <name type="synonym">URE1</name>
    <name type="ordered locus">YOR375C</name>
</gene>
<reference key="1">
    <citation type="journal article" date="1985" name="J. Biol. Chem.">
        <title>Nucleotide sequence of yeast GDH1 encoding nicotinamide adenine dinucleotide phosphate-dependent glutamate dehydrogenase.</title>
        <authorList>
            <person name="Moye W.S."/>
            <person name="Amuro N."/>
            <person name="Rao J.K.M."/>
            <person name="Zalkin H."/>
        </authorList>
    </citation>
    <scope>NUCLEOTIDE SEQUENCE [GENOMIC DNA]</scope>
    <scope>FUNCTION</scope>
    <scope>CATALYTIC ACTIVITY</scope>
</reference>
<reference key="2">
    <citation type="journal article" date="1985" name="Gene">
        <title>Nucleotide sequence of the GDH gene coding for the NADP-specific glutamate dehydrogenase of Saccharomyces cerevisiae.</title>
        <authorList>
            <person name="Nagasu T."/>
            <person name="Hall B.D."/>
        </authorList>
    </citation>
    <scope>NUCLEOTIDE SEQUENCE [GENOMIC DNA]</scope>
    <scope>CATALYTIC ACTIVITY</scope>
</reference>
<reference key="3">
    <citation type="journal article" date="1997" name="Nature">
        <title>The nucleotide sequence of Saccharomyces cerevisiae chromosome XV.</title>
        <authorList>
            <person name="Dujon B."/>
            <person name="Albermann K."/>
            <person name="Aldea M."/>
            <person name="Alexandraki D."/>
            <person name="Ansorge W."/>
            <person name="Arino J."/>
            <person name="Benes V."/>
            <person name="Bohn C."/>
            <person name="Bolotin-Fukuhara M."/>
            <person name="Bordonne R."/>
            <person name="Boyer J."/>
            <person name="Camasses A."/>
            <person name="Casamayor A."/>
            <person name="Casas C."/>
            <person name="Cheret G."/>
            <person name="Cziepluch C."/>
            <person name="Daignan-Fornier B."/>
            <person name="Dang V.-D."/>
            <person name="de Haan M."/>
            <person name="Delius H."/>
            <person name="Durand P."/>
            <person name="Fairhead C."/>
            <person name="Feldmann H."/>
            <person name="Gaillon L."/>
            <person name="Galisson F."/>
            <person name="Gamo F.-J."/>
            <person name="Gancedo C."/>
            <person name="Goffeau A."/>
            <person name="Goulding S.E."/>
            <person name="Grivell L.A."/>
            <person name="Habbig B."/>
            <person name="Hand N.J."/>
            <person name="Hani J."/>
            <person name="Hattenhorst U."/>
            <person name="Hebling U."/>
            <person name="Hernando Y."/>
            <person name="Herrero E."/>
            <person name="Heumann K."/>
            <person name="Hiesel R."/>
            <person name="Hilger F."/>
            <person name="Hofmann B."/>
            <person name="Hollenberg C.P."/>
            <person name="Hughes B."/>
            <person name="Jauniaux J.-C."/>
            <person name="Kalogeropoulos A."/>
            <person name="Katsoulou C."/>
            <person name="Kordes E."/>
            <person name="Lafuente M.J."/>
            <person name="Landt O."/>
            <person name="Louis E.J."/>
            <person name="Maarse A.C."/>
            <person name="Madania A."/>
            <person name="Mannhaupt G."/>
            <person name="Marck C."/>
            <person name="Martin R.P."/>
            <person name="Mewes H.-W."/>
            <person name="Michaux G."/>
            <person name="Paces V."/>
            <person name="Parle-McDermott A.G."/>
            <person name="Pearson B.M."/>
            <person name="Perrin A."/>
            <person name="Pettersson B."/>
            <person name="Poch O."/>
            <person name="Pohl T.M."/>
            <person name="Poirey R."/>
            <person name="Portetelle D."/>
            <person name="Pujol A."/>
            <person name="Purnelle B."/>
            <person name="Ramezani Rad M."/>
            <person name="Rechmann S."/>
            <person name="Schwager C."/>
            <person name="Schweizer M."/>
            <person name="Sor F."/>
            <person name="Sterky F."/>
            <person name="Tarassov I.A."/>
            <person name="Teodoru C."/>
            <person name="Tettelin H."/>
            <person name="Thierry A."/>
            <person name="Tobiasch E."/>
            <person name="Tzermia M."/>
            <person name="Uhlen M."/>
            <person name="Unseld M."/>
            <person name="Valens M."/>
            <person name="Vandenbol M."/>
            <person name="Vetter I."/>
            <person name="Vlcek C."/>
            <person name="Voet M."/>
            <person name="Volckaert G."/>
            <person name="Voss H."/>
            <person name="Wambutt R."/>
            <person name="Wedler H."/>
            <person name="Wiemann S."/>
            <person name="Winsor B."/>
            <person name="Wolfe K.H."/>
            <person name="Zollner A."/>
            <person name="Zumstein E."/>
            <person name="Kleine K."/>
        </authorList>
    </citation>
    <scope>NUCLEOTIDE SEQUENCE [LARGE SCALE GENOMIC DNA]</scope>
    <source>
        <strain>ATCC 204508 / S288c</strain>
    </source>
</reference>
<reference key="4">
    <citation type="journal article" date="2014" name="G3 (Bethesda)">
        <title>The reference genome sequence of Saccharomyces cerevisiae: Then and now.</title>
        <authorList>
            <person name="Engel S.R."/>
            <person name="Dietrich F.S."/>
            <person name="Fisk D.G."/>
            <person name="Binkley G."/>
            <person name="Balakrishnan R."/>
            <person name="Costanzo M.C."/>
            <person name="Dwight S.S."/>
            <person name="Hitz B.C."/>
            <person name="Karra K."/>
            <person name="Nash R.S."/>
            <person name="Weng S."/>
            <person name="Wong E.D."/>
            <person name="Lloyd P."/>
            <person name="Skrzypek M.S."/>
            <person name="Miyasato S.R."/>
            <person name="Simison M."/>
            <person name="Cherry J.M."/>
        </authorList>
    </citation>
    <scope>GENOME REANNOTATION</scope>
    <source>
        <strain>ATCC 204508 / S288c</strain>
    </source>
</reference>
<reference key="5">
    <citation type="journal article" date="1996" name="FEMS Microbiol. Lett.">
        <title>Protein expression during exponential growth in 0.7 M NaCl medium of Saccharomyces cerevisiae.</title>
        <authorList>
            <person name="Norbeck J."/>
            <person name="Blomberg A."/>
        </authorList>
    </citation>
    <scope>PROTEIN SEQUENCE OF 79-88; 157-165 AND 236-246</scope>
    <source>
        <strain>ATCC 38531 / Y41</strain>
    </source>
</reference>
<reference key="6">
    <citation type="journal article" date="2003" name="Nature">
        <title>Global analysis of protein expression in yeast.</title>
        <authorList>
            <person name="Ghaemmaghami S."/>
            <person name="Huh W.-K."/>
            <person name="Bower K."/>
            <person name="Howson R.W."/>
            <person name="Belle A."/>
            <person name="Dephoure N."/>
            <person name="O'Shea E.K."/>
            <person name="Weissman J.S."/>
        </authorList>
    </citation>
    <scope>LEVEL OF PROTEIN EXPRESSION [LARGE SCALE ANALYSIS]</scope>
</reference>
<reference key="7">
    <citation type="journal article" date="2003" name="Nat. Biotechnol.">
        <title>A proteomics approach to understanding protein ubiquitination.</title>
        <authorList>
            <person name="Peng J."/>
            <person name="Schwartz D."/>
            <person name="Elias J.E."/>
            <person name="Thoreen C.C."/>
            <person name="Cheng D."/>
            <person name="Marsischky G."/>
            <person name="Roelofs J."/>
            <person name="Finley D."/>
            <person name="Gygi S.P."/>
        </authorList>
    </citation>
    <scope>UBIQUITINATION [LARGE SCALE ANALYSIS] AT LYS-325 AND LYS-371</scope>
    <scope>IDENTIFICATION BY MASS SPECTROMETRY</scope>
    <source>
        <strain>SUB592</strain>
    </source>
</reference>
<reference key="8">
    <citation type="journal article" date="2012" name="Proc. Natl. Acad. Sci. U.S.A.">
        <title>N-terminal acetylome analyses and functional insights of the N-terminal acetyltransferase NatB.</title>
        <authorList>
            <person name="Van Damme P."/>
            <person name="Lasa M."/>
            <person name="Polevoda B."/>
            <person name="Gazquez C."/>
            <person name="Elosegui-Artola A."/>
            <person name="Kim D.S."/>
            <person name="De Juan-Pardo E."/>
            <person name="Demeyer K."/>
            <person name="Hole K."/>
            <person name="Larrea E."/>
            <person name="Timmerman E."/>
            <person name="Prieto J."/>
            <person name="Arnesen T."/>
            <person name="Sherman F."/>
            <person name="Gevaert K."/>
            <person name="Aldabe R."/>
        </authorList>
    </citation>
    <scope>ACETYLATION [LARGE SCALE ANALYSIS] AT SER-2</scope>
    <scope>CLEAVAGE OF INITIATOR METHIONINE [LARGE SCALE ANALYSIS]</scope>
    <scope>IDENTIFICATION BY MASS SPECTROMETRY [LARGE SCALE ANALYSIS]</scope>
</reference>
<reference key="9">
    <citation type="journal article" date="2012" name="Proteomics">
        <title>Sites of ubiquitin attachment in Saccharomyces cerevisiae.</title>
        <authorList>
            <person name="Starita L.M."/>
            <person name="Lo R.S."/>
            <person name="Eng J.K."/>
            <person name="von Haller P.D."/>
            <person name="Fields S."/>
        </authorList>
    </citation>
    <scope>UBIQUITINATION [LARGE SCALE ANALYSIS] AT LYS-325; LYS-371 AND LYS-433</scope>
    <scope>IDENTIFICATION BY MASS SPECTROMETRY [LARGE SCALE ANALYSIS]</scope>
</reference>
<organism>
    <name type="scientific">Saccharomyces cerevisiae (strain ATCC 204508 / S288c)</name>
    <name type="common">Baker's yeast</name>
    <dbReference type="NCBI Taxonomy" id="559292"/>
    <lineage>
        <taxon>Eukaryota</taxon>
        <taxon>Fungi</taxon>
        <taxon>Dikarya</taxon>
        <taxon>Ascomycota</taxon>
        <taxon>Saccharomycotina</taxon>
        <taxon>Saccharomycetes</taxon>
        <taxon>Saccharomycetales</taxon>
        <taxon>Saccharomycetaceae</taxon>
        <taxon>Saccharomyces</taxon>
    </lineage>
</organism>
<feature type="initiator methionine" description="Removed" evidence="11">
    <location>
        <position position="1"/>
    </location>
</feature>
<feature type="chain" id="PRO_0000182798" description="NADP-specific glutamate dehydrogenase 1">
    <location>
        <begin position="2"/>
        <end position="454"/>
    </location>
</feature>
<feature type="active site" evidence="2">
    <location>
        <position position="110"/>
    </location>
</feature>
<feature type="binding site" evidence="1">
    <location>
        <begin position="174"/>
        <end position="203"/>
    </location>
    <ligand>
        <name>NAD(+)</name>
        <dbReference type="ChEBI" id="CHEBI:57540"/>
    </ligand>
</feature>
<feature type="modified residue" description="N-acetylserine" evidence="11">
    <location>
        <position position="2"/>
    </location>
</feature>
<feature type="cross-link" description="Glycyl lysine isopeptide (Lys-Gly) (interchain with G-Cter in ubiquitin)" evidence="10">
    <location>
        <position position="325"/>
    </location>
</feature>
<feature type="cross-link" description="Glycyl lysine isopeptide (Lys-Gly) (interchain with G-Cter in ubiquitin)" evidence="10">
    <location>
        <position position="371"/>
    </location>
</feature>
<feature type="cross-link" description="Glycyl lysine isopeptide (Lys-Gly) (interchain with G-Cter in ubiquitin)" evidence="10">
    <location>
        <position position="433"/>
    </location>
</feature>
<feature type="sequence conflict" description="In Ref. 1; AAB03898." evidence="8" ref="1">
    <original>V</original>
    <variation>G</variation>
    <location>
        <position position="83"/>
    </location>
</feature>
<feature type="sequence conflict" description="In Ref. 1; AAB03898." evidence="8" ref="1">
    <original>V</original>
    <variation>L</variation>
    <location>
        <position position="198"/>
    </location>
</feature>
<feature type="sequence conflict" description="In Ref. 1; AAB03898." evidence="8" ref="1">
    <original>S</original>
    <variation>L</variation>
    <location>
        <position position="255"/>
    </location>
</feature>
<feature type="sequence conflict" description="In Ref. 1; AAB03898." evidence="8" ref="1">
    <original>D</original>
    <variation>V</variation>
    <location>
        <position position="266"/>
    </location>
</feature>
<feature type="sequence conflict" description="In Ref. 2; AAA34642." evidence="8" ref="2">
    <original>ATGPSEA</original>
    <variation>PLDQAT</variation>
    <location>
        <begin position="358"/>
        <end position="364"/>
    </location>
</feature>
<evidence type="ECO:0000250" key="1"/>
<evidence type="ECO:0000255" key="2">
    <source>
        <dbReference type="PROSITE-ProRule" id="PRU10011"/>
    </source>
</evidence>
<evidence type="ECO:0000269" key="3">
    <source>
    </source>
</evidence>
<evidence type="ECO:0000269" key="4">
    <source>
    </source>
</evidence>
<evidence type="ECO:0000269" key="5">
    <source>
    </source>
</evidence>
<evidence type="ECO:0000303" key="6">
    <source>
    </source>
</evidence>
<evidence type="ECO:0000303" key="7">
    <source>
    </source>
</evidence>
<evidence type="ECO:0000305" key="8"/>
<evidence type="ECO:0000305" key="9">
    <source>
    </source>
</evidence>
<evidence type="ECO:0007744" key="10">
    <source>
    </source>
</evidence>
<evidence type="ECO:0007744" key="11">
    <source>
    </source>
</evidence>